<evidence type="ECO:0000250" key="1"/>
<evidence type="ECO:0000250" key="2">
    <source>
        <dbReference type="UniProtKB" id="O00303"/>
    </source>
</evidence>
<evidence type="ECO:0000255" key="3">
    <source>
        <dbReference type="HAMAP-Rule" id="MF_03005"/>
    </source>
</evidence>
<evidence type="ECO:0000255" key="4">
    <source>
        <dbReference type="PROSITE-ProRule" id="PRU01182"/>
    </source>
</evidence>
<evidence type="ECO:0000256" key="5">
    <source>
        <dbReference type="SAM" id="MobiDB-lite"/>
    </source>
</evidence>
<organism>
    <name type="scientific">Macaca fascicularis</name>
    <name type="common">Crab-eating macaque</name>
    <name type="synonym">Cynomolgus monkey</name>
    <dbReference type="NCBI Taxonomy" id="9541"/>
    <lineage>
        <taxon>Eukaryota</taxon>
        <taxon>Metazoa</taxon>
        <taxon>Chordata</taxon>
        <taxon>Craniata</taxon>
        <taxon>Vertebrata</taxon>
        <taxon>Euteleostomi</taxon>
        <taxon>Mammalia</taxon>
        <taxon>Eutheria</taxon>
        <taxon>Euarchontoglires</taxon>
        <taxon>Primates</taxon>
        <taxon>Haplorrhini</taxon>
        <taxon>Catarrhini</taxon>
        <taxon>Cercopithecidae</taxon>
        <taxon>Cercopithecinae</taxon>
        <taxon>Macaca</taxon>
    </lineage>
</organism>
<gene>
    <name evidence="3" type="primary">EIF3F</name>
    <name evidence="3" type="synonym">EIF3S5</name>
    <name type="ORF">QtrA-12369</name>
</gene>
<feature type="initiator methionine" description="Removed" evidence="3">
    <location>
        <position position="1"/>
    </location>
</feature>
<feature type="chain" id="PRO_0000297558" description="Eukaryotic translation initiation factor 3 subunit F">
    <location>
        <begin position="2"/>
        <end position="361"/>
    </location>
</feature>
<feature type="domain" description="MPN" evidence="4">
    <location>
        <begin position="96"/>
        <end position="226"/>
    </location>
</feature>
<feature type="region of interest" description="Disordered" evidence="5">
    <location>
        <begin position="1"/>
        <end position="42"/>
    </location>
</feature>
<feature type="region of interest" description="Disordered" evidence="5">
    <location>
        <begin position="55"/>
        <end position="86"/>
    </location>
</feature>
<feature type="compositionally biased region" description="Low complexity" evidence="5">
    <location>
        <begin position="1"/>
        <end position="11"/>
    </location>
</feature>
<feature type="compositionally biased region" description="Low complexity" evidence="5">
    <location>
        <begin position="21"/>
        <end position="42"/>
    </location>
</feature>
<feature type="compositionally biased region" description="Low complexity" evidence="5">
    <location>
        <begin position="55"/>
        <end position="78"/>
    </location>
</feature>
<feature type="modified residue" description="N-acetylalanine" evidence="2 3">
    <location>
        <position position="2"/>
    </location>
</feature>
<feature type="modified residue" description="Phosphoserine; by CDK11; in vitro" evidence="2 3">
    <location>
        <position position="50"/>
    </location>
</feature>
<feature type="modified residue" description="N6-acetyllysine" evidence="2">
    <location>
        <position position="242"/>
    </location>
</feature>
<feature type="modified residue" description="Phosphoserine" evidence="2 3">
    <location>
        <position position="262"/>
    </location>
</feature>
<dbReference type="EC" id="3.4.19.12"/>
<dbReference type="EMBL" id="AB169626">
    <property type="protein sequence ID" value="BAE01707.1"/>
    <property type="molecule type" value="mRNA"/>
</dbReference>
<dbReference type="RefSeq" id="NP_001271708.1">
    <property type="nucleotide sequence ID" value="NM_001284779.1"/>
</dbReference>
<dbReference type="SMR" id="Q4R5B8"/>
<dbReference type="STRING" id="9541.ENSMFAP00000030853"/>
<dbReference type="MEROPS" id="M67.974"/>
<dbReference type="eggNOG" id="KOG2975">
    <property type="taxonomic scope" value="Eukaryota"/>
</dbReference>
<dbReference type="Proteomes" id="UP000233100">
    <property type="component" value="Unplaced"/>
</dbReference>
<dbReference type="GO" id="GO:0016282">
    <property type="term" value="C:eukaryotic 43S preinitiation complex"/>
    <property type="evidence" value="ECO:0007669"/>
    <property type="project" value="UniProtKB-UniRule"/>
</dbReference>
<dbReference type="GO" id="GO:0033290">
    <property type="term" value="C:eukaryotic 48S preinitiation complex"/>
    <property type="evidence" value="ECO:0007669"/>
    <property type="project" value="UniProtKB-UniRule"/>
</dbReference>
<dbReference type="GO" id="GO:0005852">
    <property type="term" value="C:eukaryotic translation initiation factor 3 complex"/>
    <property type="evidence" value="ECO:0000250"/>
    <property type="project" value="UniProtKB"/>
</dbReference>
<dbReference type="GO" id="GO:0071541">
    <property type="term" value="C:eukaryotic translation initiation factor 3 complex, eIF3m"/>
    <property type="evidence" value="ECO:0007669"/>
    <property type="project" value="TreeGrafter"/>
</dbReference>
<dbReference type="GO" id="GO:0004843">
    <property type="term" value="F:cysteine-type deubiquitinase activity"/>
    <property type="evidence" value="ECO:0007669"/>
    <property type="project" value="UniProtKB-EC"/>
</dbReference>
<dbReference type="GO" id="GO:0008237">
    <property type="term" value="F:metallopeptidase activity"/>
    <property type="evidence" value="ECO:0007669"/>
    <property type="project" value="InterPro"/>
</dbReference>
<dbReference type="GO" id="GO:0003743">
    <property type="term" value="F:translation initiation factor activity"/>
    <property type="evidence" value="ECO:0007669"/>
    <property type="project" value="UniProtKB-UniRule"/>
</dbReference>
<dbReference type="GO" id="GO:0031369">
    <property type="term" value="F:translation initiation factor binding"/>
    <property type="evidence" value="ECO:0007669"/>
    <property type="project" value="InterPro"/>
</dbReference>
<dbReference type="GO" id="GO:0001732">
    <property type="term" value="P:formation of cytoplasmic translation initiation complex"/>
    <property type="evidence" value="ECO:0007669"/>
    <property type="project" value="UniProtKB-UniRule"/>
</dbReference>
<dbReference type="GO" id="GO:0006508">
    <property type="term" value="P:proteolysis"/>
    <property type="evidence" value="ECO:0007669"/>
    <property type="project" value="UniProtKB-KW"/>
</dbReference>
<dbReference type="GO" id="GO:0006413">
    <property type="term" value="P:translational initiation"/>
    <property type="evidence" value="ECO:0000250"/>
    <property type="project" value="UniProtKB"/>
</dbReference>
<dbReference type="CDD" id="cd08064">
    <property type="entry name" value="MPN_eIF3f"/>
    <property type="match status" value="1"/>
</dbReference>
<dbReference type="FunFam" id="3.40.140.10:FF:000014">
    <property type="entry name" value="Eukaryotic translation initiation factor 3 subunit F"/>
    <property type="match status" value="1"/>
</dbReference>
<dbReference type="Gene3D" id="3.40.140.10">
    <property type="entry name" value="Cytidine Deaminase, domain 2"/>
    <property type="match status" value="1"/>
</dbReference>
<dbReference type="HAMAP" id="MF_03005">
    <property type="entry name" value="eIF3f"/>
    <property type="match status" value="1"/>
</dbReference>
<dbReference type="InterPro" id="IPR027531">
    <property type="entry name" value="eIF3f"/>
</dbReference>
<dbReference type="InterPro" id="IPR024969">
    <property type="entry name" value="EIF3F/CSN6-like_C"/>
</dbReference>
<dbReference type="InterPro" id="IPR000555">
    <property type="entry name" value="JAMM/MPN+_dom"/>
</dbReference>
<dbReference type="InterPro" id="IPR037518">
    <property type="entry name" value="MPN"/>
</dbReference>
<dbReference type="PANTHER" id="PTHR10540:SF6">
    <property type="entry name" value="EUKARYOTIC TRANSLATION INITIATION FACTOR 3 SUBUNIT F"/>
    <property type="match status" value="1"/>
</dbReference>
<dbReference type="PANTHER" id="PTHR10540">
    <property type="entry name" value="EUKARYOTIC TRANSLATION INITIATION FACTOR 3 SUBUNIT F-RELATED"/>
    <property type="match status" value="1"/>
</dbReference>
<dbReference type="Pfam" id="PF01398">
    <property type="entry name" value="JAB"/>
    <property type="match status" value="1"/>
</dbReference>
<dbReference type="Pfam" id="PF13012">
    <property type="entry name" value="MitMem_reg"/>
    <property type="match status" value="1"/>
</dbReference>
<dbReference type="SMART" id="SM00232">
    <property type="entry name" value="JAB_MPN"/>
    <property type="match status" value="1"/>
</dbReference>
<dbReference type="PROSITE" id="PS50249">
    <property type="entry name" value="MPN"/>
    <property type="match status" value="1"/>
</dbReference>
<name>EIF3F_MACFA</name>
<protein>
    <recommendedName>
        <fullName evidence="3">Eukaryotic translation initiation factor 3 subunit F</fullName>
        <shortName evidence="3">eIF3f</shortName>
    </recommendedName>
    <alternativeName>
        <fullName>Deubiquitinating enzyme eIF3f</fullName>
        <ecNumber>3.4.19.12</ecNumber>
    </alternativeName>
    <alternativeName>
        <fullName evidence="3">Eukaryotic translation initiation factor 3 subunit 5</fullName>
    </alternativeName>
    <alternativeName>
        <fullName evidence="3">eIF-3-epsilon</fullName>
    </alternativeName>
    <alternativeName>
        <fullName evidence="3">eIF3 p47</fullName>
    </alternativeName>
</protein>
<accession>Q4R5B8</accession>
<keyword id="KW-0007">Acetylation</keyword>
<keyword id="KW-0963">Cytoplasm</keyword>
<keyword id="KW-0378">Hydrolase</keyword>
<keyword id="KW-0396">Initiation factor</keyword>
<keyword id="KW-0597">Phosphoprotein</keyword>
<keyword id="KW-0645">Protease</keyword>
<keyword id="KW-0648">Protein biosynthesis</keyword>
<keyword id="KW-1185">Reference proteome</keyword>
<keyword id="KW-0788">Thiol protease</keyword>
<keyword id="KW-0833">Ubl conjugation pathway</keyword>
<comment type="function">
    <text evidence="3">Component of the eukaryotic translation initiation factor 3 (eIF-3) complex, which is required for several steps in the initiation of protein synthesis. The eIF-3 complex associates with the 40S ribosome and facilitates the recruitment of eIF-1, eIF-1A, eIF-2:GTP:methionyl-tRNAi and eIF-5 to form the 43S pre-initiation complex (43S PIC). The eIF-3 complex stimulates mRNA recruitment to the 43S PIC and scanning of the mRNA for AUG recognition. The eIF-3 complex is also required for disassembly and recycling of post-termination ribosomal complexes and subsequently prevents premature joining of the 40S and 60S ribosomal subunits prior to initiation. The eIF-3 complex specifically targets and initiates translation of a subset of mRNAs involved in cell proliferation, including cell cycling, differentiation and apoptosis, and uses different modes of RNA stem-loop binding to exert either translational activation or repression.</text>
</comment>
<comment type="function">
    <text evidence="3">Deubiquitinates activated NOTCH1, promoting its nuclear import, thereby acting as a positive regulator of Notch signaling.</text>
</comment>
<comment type="catalytic activity">
    <reaction>
        <text>Thiol-dependent hydrolysis of ester, thioester, amide, peptide and isopeptide bonds formed by the C-terminal Gly of ubiquitin (a 76-residue protein attached to proteins as an intracellular targeting signal).</text>
        <dbReference type="EC" id="3.4.19.12"/>
    </reaction>
</comment>
<comment type="subunit">
    <text evidence="3">Component of the eukaryotic translation initiation factor 3 (eIF-3) complex, which is composed of 13 subunits: EIF3A, EIF3B, EIF3C, EIF3D, EIF3E, EIF3F, EIF3G, EIF3H, EIF3I, EIF3J, EIF3K, EIF3L and EIF3M. The eIF-3 complex appears to include 3 stable modules: module A is composed of EIF3A, EIF3B, EIF3G and EIF3I; module B is composed of EIF3F, EIF3H, and EIF3M; and module C is composed of EIF3C, EIF3D, EIF3E, EIF3K and EIF3L. EIF3C of module C binds EIF3B of module A and EIF3H of module B, thereby linking the three modules. EIF3J is a labile subunit that binds to the eIF-3 complex via EIF3B. The eIF-3 complex interacts with RPS6KB1 under conditions of nutrient depletion. Mitogenic stimulation leads to binding and activation of a complex composed of MTOR and RPTOR, leading to phosphorylation and release of RPS6KB1 and binding of EIF4B to eIF-3. Interacts with RNF139; the interaction leads to protein translation inhibitions in a ubiquitination-dependent manner. Interacts with DTX1, the interaction is required for deubiquitinating activity towards NOTCH1 (By similarity).</text>
</comment>
<comment type="subcellular location">
    <subcellularLocation>
        <location evidence="3">Cytoplasm</location>
    </subcellularLocation>
</comment>
<comment type="domain">
    <text evidence="1">The MPN domain mediates deubiquitinating activity.</text>
</comment>
<comment type="PTM">
    <text evidence="1">Phosphorylation is enhanced upon serum stimulation. Phosphorylated during apoptosis by caspase-processed CDK11 (By similarity).</text>
</comment>
<comment type="similarity">
    <text evidence="3">Belongs to the eIF-3 subunit F family.</text>
</comment>
<proteinExistence type="evidence at transcript level"/>
<reference key="1">
    <citation type="submission" date="2005-06" db="EMBL/GenBank/DDBJ databases">
        <title>DNA sequences of macaque genes expressed in brain or testis and its evolutionary implications.</title>
        <authorList>
            <consortium name="International consortium for macaque cDNA sequencing and analysis"/>
        </authorList>
    </citation>
    <scope>NUCLEOTIDE SEQUENCE [LARGE SCALE MRNA]</scope>
    <source>
        <tissue>Temporal cortex</tissue>
    </source>
</reference>
<sequence>MATPVVSASGPPATPAPAPVAAPASASASVPAPTPAPAAAAVPAAAPAASSDPAAAAATTAAPGQTPASAQAPAQTPAPALPGPALPGPFPGGRVVRLHPVILASIVDSYERRNEGAARVIGTLLGTVDKHSVEVTNCFSVPHNESEDEVAVDMEFAKNMYELHKKVSPNELILGWYATGHDITEHSVLIHEYYSREAPNPIHLTVDTSLQNGRMSIKAYVSTLMGVPGRTMGVMFTPLTVKYAYYDTERIGVDLIMKTCFSPNRVIGLSSDLQQVGGASARIQDALSTVLQYAEDVLSGKVSADNTVGRFLMSLVNQVPKIVPDDFETMLNSNINDLLMVTYLANLTQSQIALNEKLVNL</sequence>